<protein>
    <recommendedName>
        <fullName evidence="1">tRNA uridine 5-carboxymethylaminomethyl modification enzyme MnmG</fullName>
    </recommendedName>
    <alternativeName>
        <fullName evidence="1">Glucose-inhibited division protein A</fullName>
    </alternativeName>
</protein>
<gene>
    <name evidence="1" type="primary">mnmG</name>
    <name evidence="1" type="synonym">gidA</name>
    <name type="ordered locus">OCAR_4370</name>
    <name type="ordered locus">OCA5_c01590</name>
</gene>
<keyword id="KW-0963">Cytoplasm</keyword>
<keyword id="KW-0274">FAD</keyword>
<keyword id="KW-0285">Flavoprotein</keyword>
<keyword id="KW-0520">NAD</keyword>
<keyword id="KW-1185">Reference proteome</keyword>
<keyword id="KW-0819">tRNA processing</keyword>
<evidence type="ECO:0000255" key="1">
    <source>
        <dbReference type="HAMAP-Rule" id="MF_00129"/>
    </source>
</evidence>
<comment type="function">
    <text evidence="1">NAD-binding protein involved in the addition of a carboxymethylaminomethyl (cmnm) group at the wobble position (U34) of certain tRNAs, forming tRNA-cmnm(5)s(2)U34.</text>
</comment>
<comment type="cofactor">
    <cofactor evidence="1">
        <name>FAD</name>
        <dbReference type="ChEBI" id="CHEBI:57692"/>
    </cofactor>
</comment>
<comment type="subunit">
    <text evidence="1">Homodimer. Heterotetramer of two MnmE and two MnmG subunits.</text>
</comment>
<comment type="subcellular location">
    <subcellularLocation>
        <location evidence="1">Cytoplasm</location>
    </subcellularLocation>
</comment>
<comment type="similarity">
    <text evidence="1">Belongs to the MnmG family.</text>
</comment>
<reference key="1">
    <citation type="journal article" date="2008" name="J. Bacteriol.">
        <title>Genome sequence of the chemolithoautotrophic bacterium Oligotropha carboxidovorans OM5T.</title>
        <authorList>
            <person name="Paul D."/>
            <person name="Bridges S."/>
            <person name="Burgess S.C."/>
            <person name="Dandass Y."/>
            <person name="Lawrence M.L."/>
        </authorList>
    </citation>
    <scope>NUCLEOTIDE SEQUENCE [LARGE SCALE GENOMIC DNA]</scope>
    <source>
        <strain>ATCC 49405 / DSM 1227 / KCTC 32145 / OM5</strain>
    </source>
</reference>
<reference key="2">
    <citation type="journal article" date="2011" name="J. Bacteriol.">
        <title>Complete genome sequences of the chemolithoautotrophic Oligotropha carboxidovorans strains OM4 and OM5.</title>
        <authorList>
            <person name="Volland S."/>
            <person name="Rachinger M."/>
            <person name="Strittmatter A."/>
            <person name="Daniel R."/>
            <person name="Gottschalk G."/>
            <person name="Meyer O."/>
        </authorList>
    </citation>
    <scope>NUCLEOTIDE SEQUENCE [LARGE SCALE GENOMIC DNA]</scope>
    <source>
        <strain>ATCC 49405 / DSM 1227 / KCTC 32145 / OM5</strain>
    </source>
</reference>
<proteinExistence type="inferred from homology"/>
<organism>
    <name type="scientific">Afipia carboxidovorans (strain ATCC 49405 / DSM 1227 / KCTC 32145 / OM5)</name>
    <name type="common">Oligotropha carboxidovorans</name>
    <dbReference type="NCBI Taxonomy" id="504832"/>
    <lineage>
        <taxon>Bacteria</taxon>
        <taxon>Pseudomonadati</taxon>
        <taxon>Pseudomonadota</taxon>
        <taxon>Alphaproteobacteria</taxon>
        <taxon>Hyphomicrobiales</taxon>
        <taxon>Nitrobacteraceae</taxon>
        <taxon>Afipia</taxon>
    </lineage>
</organism>
<name>MNMG_AFIC5</name>
<accession>B6JAJ1</accession>
<accession>F8BS24</accession>
<feature type="chain" id="PRO_1000122752" description="tRNA uridine 5-carboxymethylaminomethyl modification enzyme MnmG">
    <location>
        <begin position="1"/>
        <end position="624"/>
    </location>
</feature>
<feature type="binding site" evidence="1">
    <location>
        <begin position="11"/>
        <end position="16"/>
    </location>
    <ligand>
        <name>FAD</name>
        <dbReference type="ChEBI" id="CHEBI:57692"/>
    </ligand>
</feature>
<feature type="binding site" evidence="1">
    <location>
        <begin position="270"/>
        <end position="284"/>
    </location>
    <ligand>
        <name>NAD(+)</name>
        <dbReference type="ChEBI" id="CHEBI:57540"/>
    </ligand>
</feature>
<dbReference type="EMBL" id="CP001196">
    <property type="protein sequence ID" value="ACI91516.1"/>
    <property type="molecule type" value="Genomic_DNA"/>
</dbReference>
<dbReference type="EMBL" id="CP002826">
    <property type="protein sequence ID" value="AEI04891.1"/>
    <property type="molecule type" value="Genomic_DNA"/>
</dbReference>
<dbReference type="RefSeq" id="WP_012561547.1">
    <property type="nucleotide sequence ID" value="NC_015684.1"/>
</dbReference>
<dbReference type="SMR" id="B6JAJ1"/>
<dbReference type="STRING" id="504832.OCA5_c01590"/>
<dbReference type="KEGG" id="oca:OCAR_4370"/>
<dbReference type="KEGG" id="ocg:OCA5_c01590"/>
<dbReference type="PATRIC" id="fig|504832.7.peg.168"/>
<dbReference type="eggNOG" id="COG0445">
    <property type="taxonomic scope" value="Bacteria"/>
</dbReference>
<dbReference type="HOGENOM" id="CLU_007831_2_2_5"/>
<dbReference type="OrthoDB" id="9815560at2"/>
<dbReference type="Proteomes" id="UP000007730">
    <property type="component" value="Chromosome"/>
</dbReference>
<dbReference type="GO" id="GO:0005829">
    <property type="term" value="C:cytosol"/>
    <property type="evidence" value="ECO:0007669"/>
    <property type="project" value="TreeGrafter"/>
</dbReference>
<dbReference type="GO" id="GO:0050660">
    <property type="term" value="F:flavin adenine dinucleotide binding"/>
    <property type="evidence" value="ECO:0007669"/>
    <property type="project" value="UniProtKB-UniRule"/>
</dbReference>
<dbReference type="GO" id="GO:0030488">
    <property type="term" value="P:tRNA methylation"/>
    <property type="evidence" value="ECO:0007669"/>
    <property type="project" value="TreeGrafter"/>
</dbReference>
<dbReference type="GO" id="GO:0002098">
    <property type="term" value="P:tRNA wobble uridine modification"/>
    <property type="evidence" value="ECO:0007669"/>
    <property type="project" value="InterPro"/>
</dbReference>
<dbReference type="FunFam" id="3.50.50.60:FF:000145">
    <property type="entry name" value="tRNA uridine 5-carboxymethylaminomethyl modification enzyme"/>
    <property type="match status" value="1"/>
</dbReference>
<dbReference type="FunFam" id="1.10.150.570:FF:000001">
    <property type="entry name" value="tRNA uridine 5-carboxymethylaminomethyl modification enzyme MnmG"/>
    <property type="match status" value="1"/>
</dbReference>
<dbReference type="FunFam" id="3.50.50.60:FF:000002">
    <property type="entry name" value="tRNA uridine 5-carboxymethylaminomethyl modification enzyme MnmG"/>
    <property type="match status" value="1"/>
</dbReference>
<dbReference type="Gene3D" id="3.50.50.60">
    <property type="entry name" value="FAD/NAD(P)-binding domain"/>
    <property type="match status" value="2"/>
</dbReference>
<dbReference type="Gene3D" id="1.10.150.570">
    <property type="entry name" value="GidA associated domain, C-terminal subdomain"/>
    <property type="match status" value="1"/>
</dbReference>
<dbReference type="Gene3D" id="1.10.10.1800">
    <property type="entry name" value="tRNA uridine 5-carboxymethylaminomethyl modification enzyme MnmG/GidA"/>
    <property type="match status" value="1"/>
</dbReference>
<dbReference type="HAMAP" id="MF_00129">
    <property type="entry name" value="MnmG_GidA"/>
    <property type="match status" value="1"/>
</dbReference>
<dbReference type="InterPro" id="IPR036188">
    <property type="entry name" value="FAD/NAD-bd_sf"/>
</dbReference>
<dbReference type="InterPro" id="IPR049312">
    <property type="entry name" value="GIDA_C_N"/>
</dbReference>
<dbReference type="InterPro" id="IPR004416">
    <property type="entry name" value="MnmG"/>
</dbReference>
<dbReference type="InterPro" id="IPR002218">
    <property type="entry name" value="MnmG-rel"/>
</dbReference>
<dbReference type="InterPro" id="IPR020595">
    <property type="entry name" value="MnmG-rel_CS"/>
</dbReference>
<dbReference type="InterPro" id="IPR026904">
    <property type="entry name" value="MnmG_C"/>
</dbReference>
<dbReference type="InterPro" id="IPR047001">
    <property type="entry name" value="MnmG_C_subdom"/>
</dbReference>
<dbReference type="InterPro" id="IPR044920">
    <property type="entry name" value="MnmG_C_subdom_sf"/>
</dbReference>
<dbReference type="InterPro" id="IPR040131">
    <property type="entry name" value="MnmG_N"/>
</dbReference>
<dbReference type="NCBIfam" id="TIGR00136">
    <property type="entry name" value="mnmG_gidA"/>
    <property type="match status" value="1"/>
</dbReference>
<dbReference type="PANTHER" id="PTHR11806">
    <property type="entry name" value="GLUCOSE INHIBITED DIVISION PROTEIN A"/>
    <property type="match status" value="1"/>
</dbReference>
<dbReference type="PANTHER" id="PTHR11806:SF0">
    <property type="entry name" value="PROTEIN MTO1 HOMOLOG, MITOCHONDRIAL"/>
    <property type="match status" value="1"/>
</dbReference>
<dbReference type="Pfam" id="PF01134">
    <property type="entry name" value="GIDA"/>
    <property type="match status" value="1"/>
</dbReference>
<dbReference type="Pfam" id="PF21680">
    <property type="entry name" value="GIDA_C_1st"/>
    <property type="match status" value="1"/>
</dbReference>
<dbReference type="Pfam" id="PF13932">
    <property type="entry name" value="SAM_GIDA_C"/>
    <property type="match status" value="1"/>
</dbReference>
<dbReference type="PRINTS" id="PR00411">
    <property type="entry name" value="PNDRDTASEI"/>
</dbReference>
<dbReference type="SMART" id="SM01228">
    <property type="entry name" value="GIDA_assoc_3"/>
    <property type="match status" value="1"/>
</dbReference>
<dbReference type="SUPFAM" id="SSF51905">
    <property type="entry name" value="FAD/NAD(P)-binding domain"/>
    <property type="match status" value="1"/>
</dbReference>
<dbReference type="PROSITE" id="PS01280">
    <property type="entry name" value="GIDA_1"/>
    <property type="match status" value="1"/>
</dbReference>
<dbReference type="PROSITE" id="PS01281">
    <property type="entry name" value="GIDA_2"/>
    <property type="match status" value="1"/>
</dbReference>
<sequence length="624" mass="67595">MRKTFDVIVVGGGHAGCEAAAASARLGAETALLTHRFATVGAMSCNPAIGGLGKGHLVREIDALDGLMGRMADTGGIQFRVLNRRKGPAVRGPRAQIDRALYAAAMQAEIRATPHLSVIEGEADALVLKDDRIAGLKLADGREFSCRAVVITTGTFLRGIIHLGETSWPAGRINEAPAMGLSKSFEQIGFTLGRLKTGTPARLDGTTIDWAAVERQPGDDPAEPFSTLTEEITTPQVECGITRTTTATHAVIRENVHRSPLYSGQIQSIGPRYCPSIEDKIVRFGDRDSHQIFLEPEGLKDTTVYPNGISTSLPEEVQKAILTTIPGLERTRMIRPGYAIEYDHVDPRELEPTLETRRVPGLFLAGQINGTTGYEEAAAQGLVAGLNAARTAGGKEGVIFDRADGYLGVMIDDLTSRGVTEPYRMFTSRAEYRLTLRADNADQRLTWRGLALGVVGFARQAQFDAKMRALDAAKEAAKSLSLTPTEGIRHGLALNRDGQRRSAFELLAYPEIGWADVARIWPQLAEVTPDIAEHVEIDAKYDVYLARQAADVSAFRRDEALVLSGVDYADVPGLSNEARQKLQKAQPRTIGQAARIEAMTPAALGILTAYLRRRSRHRSDAKAG</sequence>